<protein>
    <recommendedName>
        <fullName evidence="1">Large ribosomal subunit protein bL9</fullName>
    </recommendedName>
    <alternativeName>
        <fullName evidence="2">50S ribosomal protein L9</fullName>
    </alternativeName>
</protein>
<organism>
    <name type="scientific">Symbiobacterium thermophilum (strain DSM 24528 / JCM 14929 / IAM 14863 / T)</name>
    <dbReference type="NCBI Taxonomy" id="292459"/>
    <lineage>
        <taxon>Bacteria</taxon>
        <taxon>Bacillati</taxon>
        <taxon>Bacillota</taxon>
        <taxon>Clostridia</taxon>
        <taxon>Eubacteriales</taxon>
        <taxon>Symbiobacteriaceae</taxon>
        <taxon>Symbiobacterium</taxon>
    </lineage>
</organism>
<dbReference type="EMBL" id="AP006840">
    <property type="protein sequence ID" value="BAD42298.1"/>
    <property type="molecule type" value="Genomic_DNA"/>
</dbReference>
<dbReference type="SMR" id="Q67J52"/>
<dbReference type="STRING" id="292459.STH3317"/>
<dbReference type="KEGG" id="sth:STH3317"/>
<dbReference type="eggNOG" id="COG0359">
    <property type="taxonomic scope" value="Bacteria"/>
</dbReference>
<dbReference type="HOGENOM" id="CLU_078938_3_0_9"/>
<dbReference type="Proteomes" id="UP000000417">
    <property type="component" value="Chromosome"/>
</dbReference>
<dbReference type="GO" id="GO:1990904">
    <property type="term" value="C:ribonucleoprotein complex"/>
    <property type="evidence" value="ECO:0007669"/>
    <property type="project" value="UniProtKB-KW"/>
</dbReference>
<dbReference type="GO" id="GO:0005840">
    <property type="term" value="C:ribosome"/>
    <property type="evidence" value="ECO:0007669"/>
    <property type="project" value="UniProtKB-KW"/>
</dbReference>
<dbReference type="GO" id="GO:0019843">
    <property type="term" value="F:rRNA binding"/>
    <property type="evidence" value="ECO:0007669"/>
    <property type="project" value="UniProtKB-UniRule"/>
</dbReference>
<dbReference type="GO" id="GO:0003735">
    <property type="term" value="F:structural constituent of ribosome"/>
    <property type="evidence" value="ECO:0007669"/>
    <property type="project" value="InterPro"/>
</dbReference>
<dbReference type="GO" id="GO:0006412">
    <property type="term" value="P:translation"/>
    <property type="evidence" value="ECO:0007669"/>
    <property type="project" value="UniProtKB-UniRule"/>
</dbReference>
<dbReference type="FunFam" id="3.40.5.10:FF:000003">
    <property type="entry name" value="50S ribosomal protein L9"/>
    <property type="match status" value="1"/>
</dbReference>
<dbReference type="Gene3D" id="3.10.430.100">
    <property type="entry name" value="Ribosomal protein L9, C-terminal domain"/>
    <property type="match status" value="1"/>
</dbReference>
<dbReference type="Gene3D" id="3.40.5.10">
    <property type="entry name" value="Ribosomal protein L9, N-terminal domain"/>
    <property type="match status" value="1"/>
</dbReference>
<dbReference type="HAMAP" id="MF_00503">
    <property type="entry name" value="Ribosomal_bL9"/>
    <property type="match status" value="1"/>
</dbReference>
<dbReference type="InterPro" id="IPR000244">
    <property type="entry name" value="Ribosomal_bL9"/>
</dbReference>
<dbReference type="InterPro" id="IPR009027">
    <property type="entry name" value="Ribosomal_bL9/RNase_H1_N"/>
</dbReference>
<dbReference type="InterPro" id="IPR020594">
    <property type="entry name" value="Ribosomal_bL9_bac/chp"/>
</dbReference>
<dbReference type="InterPro" id="IPR020069">
    <property type="entry name" value="Ribosomal_bL9_C"/>
</dbReference>
<dbReference type="InterPro" id="IPR036791">
    <property type="entry name" value="Ribosomal_bL9_C_sf"/>
</dbReference>
<dbReference type="InterPro" id="IPR020070">
    <property type="entry name" value="Ribosomal_bL9_N"/>
</dbReference>
<dbReference type="InterPro" id="IPR036935">
    <property type="entry name" value="Ribosomal_bL9_N_sf"/>
</dbReference>
<dbReference type="NCBIfam" id="TIGR00158">
    <property type="entry name" value="L9"/>
    <property type="match status" value="1"/>
</dbReference>
<dbReference type="PANTHER" id="PTHR21368">
    <property type="entry name" value="50S RIBOSOMAL PROTEIN L9"/>
    <property type="match status" value="1"/>
</dbReference>
<dbReference type="Pfam" id="PF03948">
    <property type="entry name" value="Ribosomal_L9_C"/>
    <property type="match status" value="1"/>
</dbReference>
<dbReference type="Pfam" id="PF01281">
    <property type="entry name" value="Ribosomal_L9_N"/>
    <property type="match status" value="1"/>
</dbReference>
<dbReference type="SUPFAM" id="SSF55658">
    <property type="entry name" value="L9 N-domain-like"/>
    <property type="match status" value="1"/>
</dbReference>
<dbReference type="SUPFAM" id="SSF55653">
    <property type="entry name" value="Ribosomal protein L9 C-domain"/>
    <property type="match status" value="1"/>
</dbReference>
<dbReference type="PROSITE" id="PS00651">
    <property type="entry name" value="RIBOSOMAL_L9"/>
    <property type="match status" value="1"/>
</dbReference>
<proteinExistence type="inferred from homology"/>
<name>RL9_SYMTH</name>
<feature type="chain" id="PRO_0000236600" description="Large ribosomal subunit protein bL9">
    <location>
        <begin position="1"/>
        <end position="146"/>
    </location>
</feature>
<accession>Q67J52</accession>
<evidence type="ECO:0000255" key="1">
    <source>
        <dbReference type="HAMAP-Rule" id="MF_00503"/>
    </source>
</evidence>
<evidence type="ECO:0000305" key="2"/>
<gene>
    <name evidence="1" type="primary">rplI</name>
    <name type="ordered locus">STH3317</name>
</gene>
<sequence length="146" mass="15884">MILKADVKGTGKKGQTVEVADGYARNYLIPRGLAVAASEGALRSIEAERKAQQEKQQRQVAELSALRDRLDGQTIQLRAKCGEGGRLFGSVTNKDVADAIARHIGKPFDRKMVELDAPIKTLGVHLVTLRFGHNITGKVNVEVLPE</sequence>
<reference key="1">
    <citation type="journal article" date="2004" name="Nucleic Acids Res.">
        <title>Genome sequence of Symbiobacterium thermophilum, an uncultivable bacterium that depends on microbial commensalism.</title>
        <authorList>
            <person name="Ueda K."/>
            <person name="Yamashita A."/>
            <person name="Ishikawa J."/>
            <person name="Shimada M."/>
            <person name="Watsuji T."/>
            <person name="Morimura K."/>
            <person name="Ikeda H."/>
            <person name="Hattori M."/>
            <person name="Beppu T."/>
        </authorList>
    </citation>
    <scope>NUCLEOTIDE SEQUENCE [LARGE SCALE GENOMIC DNA]</scope>
    <source>
        <strain>DSM 24528 / JCM 14929 / IAM 14863 / T</strain>
    </source>
</reference>
<keyword id="KW-1185">Reference proteome</keyword>
<keyword id="KW-0687">Ribonucleoprotein</keyword>
<keyword id="KW-0689">Ribosomal protein</keyword>
<keyword id="KW-0694">RNA-binding</keyword>
<keyword id="KW-0699">rRNA-binding</keyword>
<comment type="function">
    <text evidence="1">Binds to the 23S rRNA.</text>
</comment>
<comment type="similarity">
    <text evidence="1">Belongs to the bacterial ribosomal protein bL9 family.</text>
</comment>